<comment type="function">
    <text evidence="1">Component of the acetyl coenzyme A carboxylase (ACC) complex. Biotin carboxylase (BC) catalyzes the carboxylation of biotin on its carrier protein (BCCP) and then the CO(2) group is transferred by the transcarboxylase to acetyl-CoA to form malonyl-CoA.</text>
</comment>
<comment type="catalytic activity">
    <reaction evidence="1">
        <text>N(6)-carboxybiotinyl-L-lysyl-[protein] + acetyl-CoA = N(6)-biotinyl-L-lysyl-[protein] + malonyl-CoA</text>
        <dbReference type="Rhea" id="RHEA:54728"/>
        <dbReference type="Rhea" id="RHEA-COMP:10505"/>
        <dbReference type="Rhea" id="RHEA-COMP:10506"/>
        <dbReference type="ChEBI" id="CHEBI:57288"/>
        <dbReference type="ChEBI" id="CHEBI:57384"/>
        <dbReference type="ChEBI" id="CHEBI:83144"/>
        <dbReference type="ChEBI" id="CHEBI:83145"/>
        <dbReference type="EC" id="2.1.3.15"/>
    </reaction>
</comment>
<comment type="cofactor">
    <cofactor evidence="1">
        <name>Zn(2+)</name>
        <dbReference type="ChEBI" id="CHEBI:29105"/>
    </cofactor>
    <text evidence="1">Binds 1 zinc ion per subunit.</text>
</comment>
<comment type="pathway">
    <text evidence="1">Lipid metabolism; malonyl-CoA biosynthesis; malonyl-CoA from acetyl-CoA: step 1/1.</text>
</comment>
<comment type="subunit">
    <text evidence="1">Acetyl-CoA carboxylase is a heterohexamer composed of biotin carboxyl carrier protein (AccB), biotin carboxylase (AccC) and two subunits each of ACCase subunit alpha (AccA) and ACCase subunit beta (AccD).</text>
</comment>
<comment type="subcellular location">
    <subcellularLocation>
        <location evidence="1">Cytoplasm</location>
    </subcellularLocation>
</comment>
<comment type="similarity">
    <text evidence="1">Belongs to the AccD/PCCB family.</text>
</comment>
<comment type="sequence caution" evidence="4">
    <conflict type="erroneous initiation">
        <sequence resource="EMBL-CDS" id="AAX66274"/>
    </conflict>
    <text>Extended N-terminus.</text>
</comment>
<name>ACCD_SALCH</name>
<accession>Q57LY8</accession>
<evidence type="ECO:0000255" key="1">
    <source>
        <dbReference type="HAMAP-Rule" id="MF_01395"/>
    </source>
</evidence>
<evidence type="ECO:0000255" key="2">
    <source>
        <dbReference type="PROSITE-ProRule" id="PRU01136"/>
    </source>
</evidence>
<evidence type="ECO:0000256" key="3">
    <source>
        <dbReference type="SAM" id="MobiDB-lite"/>
    </source>
</evidence>
<evidence type="ECO:0000305" key="4"/>
<protein>
    <recommendedName>
        <fullName evidence="1">Acetyl-coenzyme A carboxylase carboxyl transferase subunit beta</fullName>
        <shortName evidence="1">ACCase subunit beta</shortName>
        <shortName evidence="1">Acetyl-CoA carboxylase carboxyltransferase subunit beta</shortName>
        <ecNumber evidence="1">2.1.3.15</ecNumber>
    </recommendedName>
</protein>
<keyword id="KW-0067">ATP-binding</keyword>
<keyword id="KW-0963">Cytoplasm</keyword>
<keyword id="KW-0275">Fatty acid biosynthesis</keyword>
<keyword id="KW-0276">Fatty acid metabolism</keyword>
<keyword id="KW-0444">Lipid biosynthesis</keyword>
<keyword id="KW-0443">Lipid metabolism</keyword>
<keyword id="KW-0479">Metal-binding</keyword>
<keyword id="KW-0547">Nucleotide-binding</keyword>
<keyword id="KW-0808">Transferase</keyword>
<keyword id="KW-0862">Zinc</keyword>
<keyword id="KW-0863">Zinc-finger</keyword>
<gene>
    <name evidence="1" type="primary">accD</name>
    <name type="ordered locus">SCH_2368</name>
</gene>
<sequence length="304" mass="33216">MSWIERIKSNITPTRKASIPEGVWTKCDSCGQVLYRAELERNLEVCPKCDHHMRMSARNRLHSLLDEGSLVELGSELEPKDVLKFRDSKKYKDRLASAQKETGEKDALVVMKGTLHGMPVVAAAFEFAFMGGSMGSVVGARFVRAVEQALEDNCPLVCFSASGGARMQEALMSLMQMAKTSAALAKMQERGLPYISVLTDPTMGGVSASFAMLGDLNIAEPKALIGFAGPRVIEQTVREKLPPGFQRSEFLIEKGAIDMIVRRPEMRLKLASILAKLMNLPAPNPDAPREGVVVPPAPDQESEA</sequence>
<dbReference type="EC" id="2.1.3.15" evidence="1"/>
<dbReference type="EMBL" id="AE017220">
    <property type="protein sequence ID" value="AAX66274.1"/>
    <property type="status" value="ALT_INIT"/>
    <property type="molecule type" value="Genomic_DNA"/>
</dbReference>
<dbReference type="RefSeq" id="WP_000118383.1">
    <property type="nucleotide sequence ID" value="NC_006905.1"/>
</dbReference>
<dbReference type="SMR" id="Q57LY8"/>
<dbReference type="KEGG" id="sec:SCH_2368"/>
<dbReference type="HOGENOM" id="CLU_015486_1_0_6"/>
<dbReference type="UniPathway" id="UPA00655">
    <property type="reaction ID" value="UER00711"/>
</dbReference>
<dbReference type="Proteomes" id="UP000000538">
    <property type="component" value="Chromosome"/>
</dbReference>
<dbReference type="GO" id="GO:0009329">
    <property type="term" value="C:acetate CoA-transferase complex"/>
    <property type="evidence" value="ECO:0007669"/>
    <property type="project" value="TreeGrafter"/>
</dbReference>
<dbReference type="GO" id="GO:0003989">
    <property type="term" value="F:acetyl-CoA carboxylase activity"/>
    <property type="evidence" value="ECO:0007669"/>
    <property type="project" value="InterPro"/>
</dbReference>
<dbReference type="GO" id="GO:0005524">
    <property type="term" value="F:ATP binding"/>
    <property type="evidence" value="ECO:0007669"/>
    <property type="project" value="UniProtKB-KW"/>
</dbReference>
<dbReference type="GO" id="GO:0016743">
    <property type="term" value="F:carboxyl- or carbamoyltransferase activity"/>
    <property type="evidence" value="ECO:0007669"/>
    <property type="project" value="UniProtKB-UniRule"/>
</dbReference>
<dbReference type="GO" id="GO:0008270">
    <property type="term" value="F:zinc ion binding"/>
    <property type="evidence" value="ECO:0007669"/>
    <property type="project" value="UniProtKB-UniRule"/>
</dbReference>
<dbReference type="GO" id="GO:0006633">
    <property type="term" value="P:fatty acid biosynthetic process"/>
    <property type="evidence" value="ECO:0007669"/>
    <property type="project" value="UniProtKB-KW"/>
</dbReference>
<dbReference type="GO" id="GO:2001295">
    <property type="term" value="P:malonyl-CoA biosynthetic process"/>
    <property type="evidence" value="ECO:0007669"/>
    <property type="project" value="UniProtKB-UniRule"/>
</dbReference>
<dbReference type="FunFam" id="3.90.226.10:FF:000013">
    <property type="entry name" value="Acetyl-coenzyme A carboxylase carboxyl transferase subunit beta"/>
    <property type="match status" value="1"/>
</dbReference>
<dbReference type="Gene3D" id="3.90.226.10">
    <property type="entry name" value="2-enoyl-CoA Hydratase, Chain A, domain 1"/>
    <property type="match status" value="1"/>
</dbReference>
<dbReference type="HAMAP" id="MF_01395">
    <property type="entry name" value="AcetylCoA_CT_beta"/>
    <property type="match status" value="1"/>
</dbReference>
<dbReference type="InterPro" id="IPR034733">
    <property type="entry name" value="AcCoA_carboxyl_beta"/>
</dbReference>
<dbReference type="InterPro" id="IPR000438">
    <property type="entry name" value="Acetyl_CoA_COase_Trfase_b_su"/>
</dbReference>
<dbReference type="InterPro" id="IPR029045">
    <property type="entry name" value="ClpP/crotonase-like_dom_sf"/>
</dbReference>
<dbReference type="InterPro" id="IPR011762">
    <property type="entry name" value="COA_CT_N"/>
</dbReference>
<dbReference type="InterPro" id="IPR041010">
    <property type="entry name" value="Znf-ACC"/>
</dbReference>
<dbReference type="NCBIfam" id="TIGR00515">
    <property type="entry name" value="accD"/>
    <property type="match status" value="1"/>
</dbReference>
<dbReference type="PANTHER" id="PTHR42995">
    <property type="entry name" value="ACETYL-COENZYME A CARBOXYLASE CARBOXYL TRANSFERASE SUBUNIT BETA, CHLOROPLASTIC"/>
    <property type="match status" value="1"/>
</dbReference>
<dbReference type="PANTHER" id="PTHR42995:SF5">
    <property type="entry name" value="ACETYL-COENZYME A CARBOXYLASE CARBOXYL TRANSFERASE SUBUNIT BETA, CHLOROPLASTIC"/>
    <property type="match status" value="1"/>
</dbReference>
<dbReference type="Pfam" id="PF01039">
    <property type="entry name" value="Carboxyl_trans"/>
    <property type="match status" value="1"/>
</dbReference>
<dbReference type="Pfam" id="PF17848">
    <property type="entry name" value="Zn_ribbon_ACC"/>
    <property type="match status" value="1"/>
</dbReference>
<dbReference type="PRINTS" id="PR01070">
    <property type="entry name" value="ACCCTRFRASEB"/>
</dbReference>
<dbReference type="SUPFAM" id="SSF52096">
    <property type="entry name" value="ClpP/crotonase"/>
    <property type="match status" value="1"/>
</dbReference>
<dbReference type="PROSITE" id="PS50980">
    <property type="entry name" value="COA_CT_NTER"/>
    <property type="match status" value="1"/>
</dbReference>
<feature type="chain" id="PRO_0000359050" description="Acetyl-coenzyme A carboxylase carboxyl transferase subunit beta">
    <location>
        <begin position="1"/>
        <end position="304"/>
    </location>
</feature>
<feature type="domain" description="CoA carboxyltransferase N-terminal" evidence="2">
    <location>
        <begin position="23"/>
        <end position="292"/>
    </location>
</feature>
<feature type="zinc finger region" description="C4-type" evidence="1">
    <location>
        <begin position="27"/>
        <end position="49"/>
    </location>
</feature>
<feature type="region of interest" description="Disordered" evidence="3">
    <location>
        <begin position="283"/>
        <end position="304"/>
    </location>
</feature>
<feature type="binding site" evidence="1">
    <location>
        <position position="27"/>
    </location>
    <ligand>
        <name>Zn(2+)</name>
        <dbReference type="ChEBI" id="CHEBI:29105"/>
    </ligand>
</feature>
<feature type="binding site" evidence="1">
    <location>
        <position position="30"/>
    </location>
    <ligand>
        <name>Zn(2+)</name>
        <dbReference type="ChEBI" id="CHEBI:29105"/>
    </ligand>
</feature>
<feature type="binding site" evidence="1">
    <location>
        <position position="46"/>
    </location>
    <ligand>
        <name>Zn(2+)</name>
        <dbReference type="ChEBI" id="CHEBI:29105"/>
    </ligand>
</feature>
<feature type="binding site" evidence="1">
    <location>
        <position position="49"/>
    </location>
    <ligand>
        <name>Zn(2+)</name>
        <dbReference type="ChEBI" id="CHEBI:29105"/>
    </ligand>
</feature>
<proteinExistence type="inferred from homology"/>
<reference key="1">
    <citation type="journal article" date="2005" name="Nucleic Acids Res.">
        <title>The genome sequence of Salmonella enterica serovar Choleraesuis, a highly invasive and resistant zoonotic pathogen.</title>
        <authorList>
            <person name="Chiu C.-H."/>
            <person name="Tang P."/>
            <person name="Chu C."/>
            <person name="Hu S."/>
            <person name="Bao Q."/>
            <person name="Yu J."/>
            <person name="Chou Y.-Y."/>
            <person name="Wang H.-S."/>
            <person name="Lee Y.-S."/>
        </authorList>
    </citation>
    <scope>NUCLEOTIDE SEQUENCE [LARGE SCALE GENOMIC DNA]</scope>
    <source>
        <strain>SC-B67</strain>
    </source>
</reference>
<organism>
    <name type="scientific">Salmonella choleraesuis (strain SC-B67)</name>
    <dbReference type="NCBI Taxonomy" id="321314"/>
    <lineage>
        <taxon>Bacteria</taxon>
        <taxon>Pseudomonadati</taxon>
        <taxon>Pseudomonadota</taxon>
        <taxon>Gammaproteobacteria</taxon>
        <taxon>Enterobacterales</taxon>
        <taxon>Enterobacteriaceae</taxon>
        <taxon>Salmonella</taxon>
    </lineage>
</organism>